<gene>
    <name type="ordered locus">SACOL2106</name>
</gene>
<dbReference type="EMBL" id="CP000046">
    <property type="protein sequence ID" value="AAW38416.1"/>
    <property type="molecule type" value="Genomic_DNA"/>
</dbReference>
<dbReference type="RefSeq" id="WP_000654185.1">
    <property type="nucleotide sequence ID" value="NZ_JBGOFO010000007.1"/>
</dbReference>
<dbReference type="SMR" id="Q5HE86"/>
<dbReference type="KEGG" id="sac:SACOL2106"/>
<dbReference type="HOGENOM" id="CLU_106658_0_0_9"/>
<dbReference type="Proteomes" id="UP000000530">
    <property type="component" value="Chromosome"/>
</dbReference>
<dbReference type="Gene3D" id="3.40.50.10360">
    <property type="entry name" value="Hypothetical protein TT1679"/>
    <property type="match status" value="1"/>
</dbReference>
<dbReference type="HAMAP" id="MF_00800">
    <property type="entry name" value="UPF0340"/>
    <property type="match status" value="1"/>
</dbReference>
<dbReference type="InterPro" id="IPR028345">
    <property type="entry name" value="Antibiotic_NAT-like"/>
</dbReference>
<dbReference type="InterPro" id="IPR006340">
    <property type="entry name" value="DUF436"/>
</dbReference>
<dbReference type="NCBIfam" id="TIGR01440">
    <property type="entry name" value="TIGR01440 family protein"/>
    <property type="match status" value="1"/>
</dbReference>
<dbReference type="Pfam" id="PF04260">
    <property type="entry name" value="DUF436"/>
    <property type="match status" value="1"/>
</dbReference>
<dbReference type="PIRSF" id="PIRSF007510">
    <property type="entry name" value="UCP007510"/>
    <property type="match status" value="1"/>
</dbReference>
<dbReference type="SUPFAM" id="SSF110710">
    <property type="entry name" value="TTHA0583/YokD-like"/>
    <property type="match status" value="1"/>
</dbReference>
<feature type="chain" id="PRO_0000213010" description="UPF0340 protein SACOL2106">
    <location>
        <begin position="1"/>
        <end position="174"/>
    </location>
</feature>
<protein>
    <recommendedName>
        <fullName evidence="1">UPF0340 protein SACOL2106</fullName>
    </recommendedName>
</protein>
<sequence>MKDLTMLLDELKDMSFFNKGDICLIGCSTSEVIGEKIGTVGSMEVAETIFNALDVVSKETGVTFAFQGCEHINRAITIEKSQYNPLTMEEVSVVPDVHAGGSLATYAFQHMKDPIVVEHITVPCGIDIGQTLIGMHIKHVCVPVRTSVKQVGQAIVTIATSRPKKIGGERAKYQ</sequence>
<accession>Q5HE86</accession>
<proteinExistence type="inferred from homology"/>
<comment type="similarity">
    <text evidence="1">Belongs to the UPF0340 family.</text>
</comment>
<reference key="1">
    <citation type="journal article" date="2005" name="J. Bacteriol.">
        <title>Insights on evolution of virulence and resistance from the complete genome analysis of an early methicillin-resistant Staphylococcus aureus strain and a biofilm-producing methicillin-resistant Staphylococcus epidermidis strain.</title>
        <authorList>
            <person name="Gill S.R."/>
            <person name="Fouts D.E."/>
            <person name="Archer G.L."/>
            <person name="Mongodin E.F."/>
            <person name="DeBoy R.T."/>
            <person name="Ravel J."/>
            <person name="Paulsen I.T."/>
            <person name="Kolonay J.F."/>
            <person name="Brinkac L.M."/>
            <person name="Beanan M.J."/>
            <person name="Dodson R.J."/>
            <person name="Daugherty S.C."/>
            <person name="Madupu R."/>
            <person name="Angiuoli S.V."/>
            <person name="Durkin A.S."/>
            <person name="Haft D.H."/>
            <person name="Vamathevan J.J."/>
            <person name="Khouri H."/>
            <person name="Utterback T.R."/>
            <person name="Lee C."/>
            <person name="Dimitrov G."/>
            <person name="Jiang L."/>
            <person name="Qin H."/>
            <person name="Weidman J."/>
            <person name="Tran K."/>
            <person name="Kang K.H."/>
            <person name="Hance I.R."/>
            <person name="Nelson K.E."/>
            <person name="Fraser C.M."/>
        </authorList>
    </citation>
    <scope>NUCLEOTIDE SEQUENCE [LARGE SCALE GENOMIC DNA]</scope>
    <source>
        <strain>COL</strain>
    </source>
</reference>
<evidence type="ECO:0000255" key="1">
    <source>
        <dbReference type="HAMAP-Rule" id="MF_00800"/>
    </source>
</evidence>
<name>Y2106_STAAC</name>
<organism>
    <name type="scientific">Staphylococcus aureus (strain COL)</name>
    <dbReference type="NCBI Taxonomy" id="93062"/>
    <lineage>
        <taxon>Bacteria</taxon>
        <taxon>Bacillati</taxon>
        <taxon>Bacillota</taxon>
        <taxon>Bacilli</taxon>
        <taxon>Bacillales</taxon>
        <taxon>Staphylococcaceae</taxon>
        <taxon>Staphylococcus</taxon>
    </lineage>
</organism>